<protein>
    <recommendedName>
        <fullName evidence="1">Large ribosomal subunit protein bL25</fullName>
    </recommendedName>
    <alternativeName>
        <fullName evidence="2">50S ribosomal protein L25</fullName>
    </alternativeName>
</protein>
<proteinExistence type="inferred from homology"/>
<organism>
    <name type="scientific">Citrobacter koseri (strain ATCC BAA-895 / CDC 4225-83 / SGSC4696)</name>
    <dbReference type="NCBI Taxonomy" id="290338"/>
    <lineage>
        <taxon>Bacteria</taxon>
        <taxon>Pseudomonadati</taxon>
        <taxon>Pseudomonadota</taxon>
        <taxon>Gammaproteobacteria</taxon>
        <taxon>Enterobacterales</taxon>
        <taxon>Enterobacteriaceae</taxon>
        <taxon>Citrobacter</taxon>
    </lineage>
</organism>
<feature type="chain" id="PRO_1000052949" description="Large ribosomal subunit protein bL25">
    <location>
        <begin position="1"/>
        <end position="94"/>
    </location>
</feature>
<dbReference type="EMBL" id="CP000822">
    <property type="protein sequence ID" value="ABV11745.1"/>
    <property type="molecule type" value="Genomic_DNA"/>
</dbReference>
<dbReference type="RefSeq" id="WP_012131568.1">
    <property type="nucleotide sequence ID" value="NC_009792.1"/>
</dbReference>
<dbReference type="SMR" id="A8AE31"/>
<dbReference type="STRING" id="290338.CKO_00591"/>
<dbReference type="GeneID" id="45134823"/>
<dbReference type="KEGG" id="cko:CKO_00591"/>
<dbReference type="HOGENOM" id="CLU_137946_0_0_6"/>
<dbReference type="OrthoDB" id="9806411at2"/>
<dbReference type="Proteomes" id="UP000008148">
    <property type="component" value="Chromosome"/>
</dbReference>
<dbReference type="GO" id="GO:0022625">
    <property type="term" value="C:cytosolic large ribosomal subunit"/>
    <property type="evidence" value="ECO:0007669"/>
    <property type="project" value="TreeGrafter"/>
</dbReference>
<dbReference type="GO" id="GO:0008097">
    <property type="term" value="F:5S rRNA binding"/>
    <property type="evidence" value="ECO:0007669"/>
    <property type="project" value="InterPro"/>
</dbReference>
<dbReference type="GO" id="GO:0003735">
    <property type="term" value="F:structural constituent of ribosome"/>
    <property type="evidence" value="ECO:0007669"/>
    <property type="project" value="InterPro"/>
</dbReference>
<dbReference type="GO" id="GO:0006412">
    <property type="term" value="P:translation"/>
    <property type="evidence" value="ECO:0007669"/>
    <property type="project" value="UniProtKB-UniRule"/>
</dbReference>
<dbReference type="CDD" id="cd00495">
    <property type="entry name" value="Ribosomal_L25_TL5_CTC"/>
    <property type="match status" value="1"/>
</dbReference>
<dbReference type="FunFam" id="2.40.240.10:FF:000002">
    <property type="entry name" value="50S ribosomal protein L25"/>
    <property type="match status" value="1"/>
</dbReference>
<dbReference type="Gene3D" id="2.40.240.10">
    <property type="entry name" value="Ribosomal Protein L25, Chain P"/>
    <property type="match status" value="1"/>
</dbReference>
<dbReference type="HAMAP" id="MF_01336">
    <property type="entry name" value="Ribosomal_bL25"/>
    <property type="match status" value="1"/>
</dbReference>
<dbReference type="InterPro" id="IPR020056">
    <property type="entry name" value="Rbsml_bL25/Gln-tRNA_synth_N"/>
</dbReference>
<dbReference type="InterPro" id="IPR011035">
    <property type="entry name" value="Ribosomal_bL25/Gln-tRNA_synth"/>
</dbReference>
<dbReference type="InterPro" id="IPR020055">
    <property type="entry name" value="Ribosomal_bL25_short"/>
</dbReference>
<dbReference type="InterPro" id="IPR029751">
    <property type="entry name" value="Ribosomal_L25_dom"/>
</dbReference>
<dbReference type="InterPro" id="IPR020930">
    <property type="entry name" value="Ribosomal_uL5_bac-type"/>
</dbReference>
<dbReference type="NCBIfam" id="NF004612">
    <property type="entry name" value="PRK05943.1"/>
    <property type="match status" value="1"/>
</dbReference>
<dbReference type="PANTHER" id="PTHR33284">
    <property type="entry name" value="RIBOSOMAL PROTEIN L25/GLN-TRNA SYNTHETASE, ANTI-CODON-BINDING DOMAIN-CONTAINING PROTEIN"/>
    <property type="match status" value="1"/>
</dbReference>
<dbReference type="PANTHER" id="PTHR33284:SF1">
    <property type="entry name" value="RIBOSOMAL PROTEIN L25_GLN-TRNA SYNTHETASE, ANTI-CODON-BINDING DOMAIN-CONTAINING PROTEIN"/>
    <property type="match status" value="1"/>
</dbReference>
<dbReference type="Pfam" id="PF01386">
    <property type="entry name" value="Ribosomal_L25p"/>
    <property type="match status" value="1"/>
</dbReference>
<dbReference type="SUPFAM" id="SSF50715">
    <property type="entry name" value="Ribosomal protein L25-like"/>
    <property type="match status" value="1"/>
</dbReference>
<reference key="1">
    <citation type="submission" date="2007-08" db="EMBL/GenBank/DDBJ databases">
        <authorList>
            <consortium name="The Citrobacter koseri Genome Sequencing Project"/>
            <person name="McClelland M."/>
            <person name="Sanderson E.K."/>
            <person name="Porwollik S."/>
            <person name="Spieth J."/>
            <person name="Clifton W.S."/>
            <person name="Latreille P."/>
            <person name="Courtney L."/>
            <person name="Wang C."/>
            <person name="Pepin K."/>
            <person name="Bhonagiri V."/>
            <person name="Nash W."/>
            <person name="Johnson M."/>
            <person name="Thiruvilangam P."/>
            <person name="Wilson R."/>
        </authorList>
    </citation>
    <scope>NUCLEOTIDE SEQUENCE [LARGE SCALE GENOMIC DNA]</scope>
    <source>
        <strain>ATCC BAA-895 / CDC 4225-83 / SGSC4696</strain>
    </source>
</reference>
<keyword id="KW-1185">Reference proteome</keyword>
<keyword id="KW-0687">Ribonucleoprotein</keyword>
<keyword id="KW-0689">Ribosomal protein</keyword>
<keyword id="KW-0694">RNA-binding</keyword>
<keyword id="KW-0699">rRNA-binding</keyword>
<name>RL25_CITK8</name>
<gene>
    <name evidence="1" type="primary">rplY</name>
    <name type="ordered locus">CKO_00591</name>
</gene>
<comment type="function">
    <text evidence="1">This is one of the proteins that binds to the 5S RNA in the ribosome where it forms part of the central protuberance.</text>
</comment>
<comment type="subunit">
    <text evidence="1">Part of the 50S ribosomal subunit; part of the 5S rRNA/L5/L18/L25 subcomplex. Contacts the 5S rRNA. Binds to the 5S rRNA independently of L5 and L18.</text>
</comment>
<comment type="similarity">
    <text evidence="1">Belongs to the bacterial ribosomal protein bL25 family.</text>
</comment>
<accession>A8AE31</accession>
<sequence>MFTINAEVRKEQGKGASRRLRAANKFPAIIYGGAEAPIAIELDHDQVMNMQAKAEFYSEVLTIVVDGKEVKVKAQAVQRHAFKPKLTHIDFVRA</sequence>
<evidence type="ECO:0000255" key="1">
    <source>
        <dbReference type="HAMAP-Rule" id="MF_01336"/>
    </source>
</evidence>
<evidence type="ECO:0000305" key="2"/>